<gene>
    <name evidence="1" type="primary">nuoI</name>
    <name type="ordered locus">Pnap_1432</name>
</gene>
<comment type="function">
    <text evidence="1">NDH-1 shuttles electrons from NADH, via FMN and iron-sulfur (Fe-S) centers, to quinones in the respiratory chain. The immediate electron acceptor for the enzyme in this species is believed to be ubiquinone. Couples the redox reaction to proton translocation (for every two electrons transferred, four hydrogen ions are translocated across the cytoplasmic membrane), and thus conserves the redox energy in a proton gradient.</text>
</comment>
<comment type="catalytic activity">
    <reaction evidence="1">
        <text>a quinone + NADH + 5 H(+)(in) = a quinol + NAD(+) + 4 H(+)(out)</text>
        <dbReference type="Rhea" id="RHEA:57888"/>
        <dbReference type="ChEBI" id="CHEBI:15378"/>
        <dbReference type="ChEBI" id="CHEBI:24646"/>
        <dbReference type="ChEBI" id="CHEBI:57540"/>
        <dbReference type="ChEBI" id="CHEBI:57945"/>
        <dbReference type="ChEBI" id="CHEBI:132124"/>
    </reaction>
</comment>
<comment type="cofactor">
    <cofactor evidence="1">
        <name>[4Fe-4S] cluster</name>
        <dbReference type="ChEBI" id="CHEBI:49883"/>
    </cofactor>
    <text evidence="1">Binds 2 [4Fe-4S] clusters per subunit.</text>
</comment>
<comment type="subunit">
    <text evidence="1">NDH-1 is composed of 14 different subunits. Subunits NuoA, H, J, K, L, M, N constitute the membrane sector of the complex.</text>
</comment>
<comment type="subcellular location">
    <subcellularLocation>
        <location evidence="1">Cell inner membrane</location>
        <topology evidence="1">Peripheral membrane protein</topology>
    </subcellularLocation>
</comment>
<comment type="similarity">
    <text evidence="1">Belongs to the complex I 23 kDa subunit family.</text>
</comment>
<organism>
    <name type="scientific">Polaromonas naphthalenivorans (strain CJ2)</name>
    <dbReference type="NCBI Taxonomy" id="365044"/>
    <lineage>
        <taxon>Bacteria</taxon>
        <taxon>Pseudomonadati</taxon>
        <taxon>Pseudomonadota</taxon>
        <taxon>Betaproteobacteria</taxon>
        <taxon>Burkholderiales</taxon>
        <taxon>Comamonadaceae</taxon>
        <taxon>Polaromonas</taxon>
    </lineage>
</organism>
<sequence>MSAVASVKDFVSSFMLTELLKGMALTGKYMFSRKITIQFPEEKTPLSPRFRGLHALRRYENGEERCIACKLCEAVCPALAITIESDVREDGSRRTSRYDIDLTKCIFCGFCEESCPVDSIVETHILEYHGEKRGDLYFTKEMLLAVGDRYENEIAANRAADAKYR</sequence>
<name>NUOI_POLNA</name>
<proteinExistence type="inferred from homology"/>
<evidence type="ECO:0000255" key="1">
    <source>
        <dbReference type="HAMAP-Rule" id="MF_01351"/>
    </source>
</evidence>
<keyword id="KW-0004">4Fe-4S</keyword>
<keyword id="KW-0997">Cell inner membrane</keyword>
<keyword id="KW-1003">Cell membrane</keyword>
<keyword id="KW-0408">Iron</keyword>
<keyword id="KW-0411">Iron-sulfur</keyword>
<keyword id="KW-0472">Membrane</keyword>
<keyword id="KW-0479">Metal-binding</keyword>
<keyword id="KW-0520">NAD</keyword>
<keyword id="KW-0874">Quinone</keyword>
<keyword id="KW-1185">Reference proteome</keyword>
<keyword id="KW-0677">Repeat</keyword>
<keyword id="KW-1278">Translocase</keyword>
<keyword id="KW-0830">Ubiquinone</keyword>
<feature type="chain" id="PRO_0000298529" description="NADH-quinone oxidoreductase subunit I">
    <location>
        <begin position="1"/>
        <end position="165"/>
    </location>
</feature>
<feature type="domain" description="4Fe-4S ferredoxin-type 1" evidence="1">
    <location>
        <begin position="57"/>
        <end position="86"/>
    </location>
</feature>
<feature type="domain" description="4Fe-4S ferredoxin-type 2" evidence="1">
    <location>
        <begin position="96"/>
        <end position="125"/>
    </location>
</feature>
<feature type="binding site" evidence="1">
    <location>
        <position position="66"/>
    </location>
    <ligand>
        <name>[4Fe-4S] cluster</name>
        <dbReference type="ChEBI" id="CHEBI:49883"/>
        <label>1</label>
    </ligand>
</feature>
<feature type="binding site" evidence="1">
    <location>
        <position position="69"/>
    </location>
    <ligand>
        <name>[4Fe-4S] cluster</name>
        <dbReference type="ChEBI" id="CHEBI:49883"/>
        <label>1</label>
    </ligand>
</feature>
<feature type="binding site" evidence="1">
    <location>
        <position position="72"/>
    </location>
    <ligand>
        <name>[4Fe-4S] cluster</name>
        <dbReference type="ChEBI" id="CHEBI:49883"/>
        <label>1</label>
    </ligand>
</feature>
<feature type="binding site" evidence="1">
    <location>
        <position position="76"/>
    </location>
    <ligand>
        <name>[4Fe-4S] cluster</name>
        <dbReference type="ChEBI" id="CHEBI:49883"/>
        <label>2</label>
    </ligand>
</feature>
<feature type="binding site" evidence="1">
    <location>
        <position position="105"/>
    </location>
    <ligand>
        <name>[4Fe-4S] cluster</name>
        <dbReference type="ChEBI" id="CHEBI:49883"/>
        <label>2</label>
    </ligand>
</feature>
<feature type="binding site" evidence="1">
    <location>
        <position position="108"/>
    </location>
    <ligand>
        <name>[4Fe-4S] cluster</name>
        <dbReference type="ChEBI" id="CHEBI:49883"/>
        <label>2</label>
    </ligand>
</feature>
<feature type="binding site" evidence="1">
    <location>
        <position position="111"/>
    </location>
    <ligand>
        <name>[4Fe-4S] cluster</name>
        <dbReference type="ChEBI" id="CHEBI:49883"/>
        <label>2</label>
    </ligand>
</feature>
<feature type="binding site" evidence="1">
    <location>
        <position position="115"/>
    </location>
    <ligand>
        <name>[4Fe-4S] cluster</name>
        <dbReference type="ChEBI" id="CHEBI:49883"/>
        <label>1</label>
    </ligand>
</feature>
<accession>A1VM68</accession>
<protein>
    <recommendedName>
        <fullName evidence="1">NADH-quinone oxidoreductase subunit I</fullName>
        <ecNumber evidence="1">7.1.1.-</ecNumber>
    </recommendedName>
    <alternativeName>
        <fullName evidence="1">NADH dehydrogenase I subunit I</fullName>
    </alternativeName>
    <alternativeName>
        <fullName evidence="1">NDH-1 subunit I</fullName>
    </alternativeName>
</protein>
<dbReference type="EC" id="7.1.1.-" evidence="1"/>
<dbReference type="EMBL" id="CP000529">
    <property type="protein sequence ID" value="ABM36746.1"/>
    <property type="molecule type" value="Genomic_DNA"/>
</dbReference>
<dbReference type="RefSeq" id="WP_011800833.1">
    <property type="nucleotide sequence ID" value="NC_008781.1"/>
</dbReference>
<dbReference type="SMR" id="A1VM68"/>
<dbReference type="STRING" id="365044.Pnap_1432"/>
<dbReference type="KEGG" id="pna:Pnap_1432"/>
<dbReference type="eggNOG" id="COG1143">
    <property type="taxonomic scope" value="Bacteria"/>
</dbReference>
<dbReference type="HOGENOM" id="CLU_067218_5_1_4"/>
<dbReference type="OrthoDB" id="9808559at2"/>
<dbReference type="Proteomes" id="UP000000644">
    <property type="component" value="Chromosome"/>
</dbReference>
<dbReference type="GO" id="GO:0005886">
    <property type="term" value="C:plasma membrane"/>
    <property type="evidence" value="ECO:0007669"/>
    <property type="project" value="UniProtKB-SubCell"/>
</dbReference>
<dbReference type="GO" id="GO:0051539">
    <property type="term" value="F:4 iron, 4 sulfur cluster binding"/>
    <property type="evidence" value="ECO:0007669"/>
    <property type="project" value="UniProtKB-KW"/>
</dbReference>
<dbReference type="GO" id="GO:0005506">
    <property type="term" value="F:iron ion binding"/>
    <property type="evidence" value="ECO:0007669"/>
    <property type="project" value="UniProtKB-UniRule"/>
</dbReference>
<dbReference type="GO" id="GO:0050136">
    <property type="term" value="F:NADH:ubiquinone reductase (non-electrogenic) activity"/>
    <property type="evidence" value="ECO:0007669"/>
    <property type="project" value="UniProtKB-UniRule"/>
</dbReference>
<dbReference type="GO" id="GO:0048038">
    <property type="term" value="F:quinone binding"/>
    <property type="evidence" value="ECO:0007669"/>
    <property type="project" value="UniProtKB-KW"/>
</dbReference>
<dbReference type="GO" id="GO:0009060">
    <property type="term" value="P:aerobic respiration"/>
    <property type="evidence" value="ECO:0007669"/>
    <property type="project" value="TreeGrafter"/>
</dbReference>
<dbReference type="FunFam" id="3.30.70.3270:FF:000003">
    <property type="entry name" value="NADH-quinone oxidoreductase subunit I"/>
    <property type="match status" value="1"/>
</dbReference>
<dbReference type="Gene3D" id="3.30.70.3270">
    <property type="match status" value="1"/>
</dbReference>
<dbReference type="HAMAP" id="MF_01351">
    <property type="entry name" value="NDH1_NuoI"/>
    <property type="match status" value="1"/>
</dbReference>
<dbReference type="InterPro" id="IPR017896">
    <property type="entry name" value="4Fe4S_Fe-S-bd"/>
</dbReference>
<dbReference type="InterPro" id="IPR017900">
    <property type="entry name" value="4Fe4S_Fe_S_CS"/>
</dbReference>
<dbReference type="InterPro" id="IPR010226">
    <property type="entry name" value="NADH_quinone_OxRdtase_chainI"/>
</dbReference>
<dbReference type="NCBIfam" id="TIGR01971">
    <property type="entry name" value="NuoI"/>
    <property type="match status" value="1"/>
</dbReference>
<dbReference type="NCBIfam" id="NF004538">
    <property type="entry name" value="PRK05888.1-4"/>
    <property type="match status" value="1"/>
</dbReference>
<dbReference type="NCBIfam" id="NF004539">
    <property type="entry name" value="PRK05888.1-5"/>
    <property type="match status" value="1"/>
</dbReference>
<dbReference type="PANTHER" id="PTHR10849:SF20">
    <property type="entry name" value="NADH DEHYDROGENASE [UBIQUINONE] IRON-SULFUR PROTEIN 8, MITOCHONDRIAL"/>
    <property type="match status" value="1"/>
</dbReference>
<dbReference type="PANTHER" id="PTHR10849">
    <property type="entry name" value="NADH DEHYDROGENASE UBIQUINONE IRON-SULFUR PROTEIN 8, MITOCHONDRIAL"/>
    <property type="match status" value="1"/>
</dbReference>
<dbReference type="Pfam" id="PF12838">
    <property type="entry name" value="Fer4_7"/>
    <property type="match status" value="1"/>
</dbReference>
<dbReference type="SUPFAM" id="SSF54862">
    <property type="entry name" value="4Fe-4S ferredoxins"/>
    <property type="match status" value="1"/>
</dbReference>
<dbReference type="PROSITE" id="PS00198">
    <property type="entry name" value="4FE4S_FER_1"/>
    <property type="match status" value="2"/>
</dbReference>
<dbReference type="PROSITE" id="PS51379">
    <property type="entry name" value="4FE4S_FER_2"/>
    <property type="match status" value="2"/>
</dbReference>
<reference key="1">
    <citation type="journal article" date="2009" name="Environ. Microbiol.">
        <title>The genome of Polaromonas naphthalenivorans strain CJ2, isolated from coal tar-contaminated sediment, reveals physiological and metabolic versatility and evolution through extensive horizontal gene transfer.</title>
        <authorList>
            <person name="Yagi J.M."/>
            <person name="Sims D."/>
            <person name="Brettin T."/>
            <person name="Bruce D."/>
            <person name="Madsen E.L."/>
        </authorList>
    </citation>
    <scope>NUCLEOTIDE SEQUENCE [LARGE SCALE GENOMIC DNA]</scope>
    <source>
        <strain>CJ2</strain>
    </source>
</reference>